<name>TES_CHICK</name>
<organism>
    <name type="scientific">Gallus gallus</name>
    <name type="common">Chicken</name>
    <dbReference type="NCBI Taxonomy" id="9031"/>
    <lineage>
        <taxon>Eukaryota</taxon>
        <taxon>Metazoa</taxon>
        <taxon>Chordata</taxon>
        <taxon>Craniata</taxon>
        <taxon>Vertebrata</taxon>
        <taxon>Euteleostomi</taxon>
        <taxon>Archelosauria</taxon>
        <taxon>Archosauria</taxon>
        <taxon>Dinosauria</taxon>
        <taxon>Saurischia</taxon>
        <taxon>Theropoda</taxon>
        <taxon>Coelurosauria</taxon>
        <taxon>Aves</taxon>
        <taxon>Neognathae</taxon>
        <taxon>Galloanserae</taxon>
        <taxon>Galliformes</taxon>
        <taxon>Phasianidae</taxon>
        <taxon>Phasianinae</taxon>
        <taxon>Gallus</taxon>
    </lineage>
</organism>
<proteinExistence type="evidence at transcript level"/>
<keyword id="KW-0965">Cell junction</keyword>
<keyword id="KW-0963">Cytoplasm</keyword>
<keyword id="KW-0440">LIM domain</keyword>
<keyword id="KW-0479">Metal-binding</keyword>
<keyword id="KW-1185">Reference proteome</keyword>
<keyword id="KW-0677">Repeat</keyword>
<keyword id="KW-0862">Zinc</keyword>
<evidence type="ECO:0000250" key="1"/>
<evidence type="ECO:0000255" key="2">
    <source>
        <dbReference type="PROSITE-ProRule" id="PRU00125"/>
    </source>
</evidence>
<evidence type="ECO:0000255" key="3">
    <source>
        <dbReference type="PROSITE-ProRule" id="PRU00636"/>
    </source>
</evidence>
<evidence type="ECO:0000256" key="4">
    <source>
        <dbReference type="SAM" id="MobiDB-lite"/>
    </source>
</evidence>
<evidence type="ECO:0000305" key="5"/>
<reference key="1">
    <citation type="submission" date="2001-06" db="EMBL/GenBank/DDBJ databases">
        <title>Characterisation of the chick TES gene.</title>
        <authorList>
            <person name="Griffith E.M."/>
            <person name="Coutts A."/>
            <person name="Black D.M."/>
        </authorList>
    </citation>
    <scope>NUCLEOTIDE SEQUENCE [MRNA]</scope>
    <source>
        <tissue>B-cell</tissue>
    </source>
</reference>
<reference key="2">
    <citation type="journal article" date="2003" name="Nature">
        <title>Comparative analyses of multi-species sequences from targeted genomic regions.</title>
        <authorList>
            <person name="Thomas J.W."/>
            <person name="Touchman J.W."/>
            <person name="Blakesley R.W."/>
            <person name="Bouffard G.G."/>
            <person name="Beckstrom-Sternberg S.M."/>
            <person name="Margulies E.H."/>
            <person name="Blanchette M."/>
            <person name="Siepel A.C."/>
            <person name="Thomas P.J."/>
            <person name="McDowell J.C."/>
            <person name="Maskeri B."/>
            <person name="Hansen N.F."/>
            <person name="Schwartz M.S."/>
            <person name="Weber R.J."/>
            <person name="Kent W.J."/>
            <person name="Karolchik D."/>
            <person name="Bruen T.C."/>
            <person name="Bevan R."/>
            <person name="Cutler D.J."/>
            <person name="Schwartz S."/>
            <person name="Elnitski L."/>
            <person name="Idol J.R."/>
            <person name="Prasad A.B."/>
            <person name="Lee-Lin S.-Q."/>
            <person name="Maduro V.V.B."/>
            <person name="Summers T.J."/>
            <person name="Portnoy M.E."/>
            <person name="Dietrich N.L."/>
            <person name="Akhter N."/>
            <person name="Ayele K."/>
            <person name="Benjamin B."/>
            <person name="Cariaga K."/>
            <person name="Brinkley C.P."/>
            <person name="Brooks S.Y."/>
            <person name="Granite S."/>
            <person name="Guan X."/>
            <person name="Gupta J."/>
            <person name="Haghighi P."/>
            <person name="Ho S.-L."/>
            <person name="Huang M.C."/>
            <person name="Karlins E."/>
            <person name="Laric P.L."/>
            <person name="Legaspi R."/>
            <person name="Lim M.J."/>
            <person name="Maduro Q.L."/>
            <person name="Masiello C.A."/>
            <person name="Mastrian S.D."/>
            <person name="McCloskey J.C."/>
            <person name="Pearson R."/>
            <person name="Stantripop S."/>
            <person name="Tiongson E.E."/>
            <person name="Tran J.T."/>
            <person name="Tsurgeon C."/>
            <person name="Vogt J.L."/>
            <person name="Walker M.A."/>
            <person name="Wetherby K.D."/>
            <person name="Wiggins L.S."/>
            <person name="Young A.C."/>
            <person name="Zhang L.-H."/>
            <person name="Osoegawa K."/>
            <person name="Zhu B."/>
            <person name="Zhao B."/>
            <person name="Shu C.L."/>
            <person name="De Jong P.J."/>
            <person name="Lawrence C.E."/>
            <person name="Smit A.F."/>
            <person name="Chakravarti A."/>
            <person name="Haussler D."/>
            <person name="Green P."/>
            <person name="Miller W."/>
            <person name="Green E.D."/>
        </authorList>
    </citation>
    <scope>NUCLEOTIDE SEQUENCE [LARGE SCALE GENOMIC DNA]</scope>
</reference>
<protein>
    <recommendedName>
        <fullName>Testin</fullName>
    </recommendedName>
</protein>
<comment type="function">
    <text evidence="1">Scaffold protein that may play a role in cell adhesion, cell spreading and in the reorganization of the actin cytoskeleton. May play a role in the regulation of cell proliferation. May inhibit cell growth (By similarity).</text>
</comment>
<comment type="subcellular location">
    <subcellularLocation>
        <location evidence="1">Cytoplasm</location>
    </subcellularLocation>
    <subcellularLocation>
        <location evidence="1">Cell junction</location>
        <location evidence="1">Focal adhesion</location>
    </subcellularLocation>
    <text evidence="1">Detected along actin stress fibers.</text>
</comment>
<comment type="domain">
    <text evidence="1">The N-terminal and the C-terminal halves of the protein can associate with each other, thereby hindering interactions with other proteins.</text>
</comment>
<comment type="similarity">
    <text evidence="5">Belongs to the prickle / espinas / testin family.</text>
</comment>
<dbReference type="EMBL" id="AJ315664">
    <property type="protein sequence ID" value="CAC42398.1"/>
    <property type="molecule type" value="mRNA"/>
</dbReference>
<dbReference type="EMBL" id="DP000235">
    <property type="protein sequence ID" value="AAR16239.1"/>
    <property type="molecule type" value="Genomic_DNA"/>
</dbReference>
<dbReference type="RefSeq" id="NP_989954.1">
    <property type="nucleotide sequence ID" value="NM_204623.2"/>
</dbReference>
<dbReference type="SMR" id="Q90YH9"/>
<dbReference type="FunCoup" id="Q90YH9">
    <property type="interactions" value="1619"/>
</dbReference>
<dbReference type="STRING" id="9031.ENSGALP00000055583"/>
<dbReference type="PaxDb" id="9031-ENSGALP00000015293"/>
<dbReference type="Ensembl" id="ENSGALT00000151329">
    <property type="protein sequence ID" value="ENSGALP00000089606"/>
    <property type="gene ID" value="ENSGALG00000031934"/>
</dbReference>
<dbReference type="Ensembl" id="ENSGALT00010002810.1">
    <property type="protein sequence ID" value="ENSGALP00010001360.1"/>
    <property type="gene ID" value="ENSGALG00010001214.1"/>
</dbReference>
<dbReference type="GeneID" id="395332"/>
<dbReference type="KEGG" id="gga:395332"/>
<dbReference type="CTD" id="26136"/>
<dbReference type="VEuPathDB" id="HostDB:geneid_395332"/>
<dbReference type="eggNOG" id="KOG1704">
    <property type="taxonomic scope" value="Eukaryota"/>
</dbReference>
<dbReference type="GeneTree" id="ENSGT00940000155993"/>
<dbReference type="HOGENOM" id="CLU_008937_1_1_1"/>
<dbReference type="InParanoid" id="Q90YH9"/>
<dbReference type="OMA" id="NFSCHQC"/>
<dbReference type="OrthoDB" id="10069167at2759"/>
<dbReference type="PhylomeDB" id="Q90YH9"/>
<dbReference type="TreeFam" id="TF313265"/>
<dbReference type="PRO" id="PR:Q90YH9"/>
<dbReference type="Proteomes" id="UP000000539">
    <property type="component" value="Chromosome 1"/>
</dbReference>
<dbReference type="GO" id="GO:0005737">
    <property type="term" value="C:cytoplasm"/>
    <property type="evidence" value="ECO:0000250"/>
    <property type="project" value="UniProtKB"/>
</dbReference>
<dbReference type="GO" id="GO:0005829">
    <property type="term" value="C:cytosol"/>
    <property type="evidence" value="ECO:0007669"/>
    <property type="project" value="Ensembl"/>
</dbReference>
<dbReference type="GO" id="GO:0005925">
    <property type="term" value="C:focal adhesion"/>
    <property type="evidence" value="ECO:0007669"/>
    <property type="project" value="UniProtKB-SubCell"/>
</dbReference>
<dbReference type="GO" id="GO:0005886">
    <property type="term" value="C:plasma membrane"/>
    <property type="evidence" value="ECO:0007669"/>
    <property type="project" value="Ensembl"/>
</dbReference>
<dbReference type="GO" id="GO:0032991">
    <property type="term" value="C:protein-containing complex"/>
    <property type="evidence" value="ECO:0007669"/>
    <property type="project" value="Ensembl"/>
</dbReference>
<dbReference type="GO" id="GO:0008270">
    <property type="term" value="F:zinc ion binding"/>
    <property type="evidence" value="ECO:0000250"/>
    <property type="project" value="UniProtKB"/>
</dbReference>
<dbReference type="GO" id="GO:0008285">
    <property type="term" value="P:negative regulation of cell population proliferation"/>
    <property type="evidence" value="ECO:0007669"/>
    <property type="project" value="Ensembl"/>
</dbReference>
<dbReference type="CDD" id="cd09413">
    <property type="entry name" value="LIM1_Testin"/>
    <property type="match status" value="1"/>
</dbReference>
<dbReference type="CDD" id="cd09416">
    <property type="entry name" value="LIM2_Testin"/>
    <property type="match status" value="1"/>
</dbReference>
<dbReference type="CDD" id="cd09419">
    <property type="entry name" value="LIM3_Testin"/>
    <property type="match status" value="1"/>
</dbReference>
<dbReference type="CDD" id="cd09829">
    <property type="entry name" value="PET_testin"/>
    <property type="match status" value="1"/>
</dbReference>
<dbReference type="FunFam" id="2.10.110.10:FF:000061">
    <property type="entry name" value="Testin"/>
    <property type="match status" value="1"/>
</dbReference>
<dbReference type="FunFam" id="2.10.110.10:FF:000065">
    <property type="entry name" value="Testin"/>
    <property type="match status" value="1"/>
</dbReference>
<dbReference type="FunFam" id="2.10.110.10:FF:000005">
    <property type="entry name" value="Testin isoform 1"/>
    <property type="match status" value="1"/>
</dbReference>
<dbReference type="Gene3D" id="2.10.110.10">
    <property type="entry name" value="Cysteine Rich Protein"/>
    <property type="match status" value="3"/>
</dbReference>
<dbReference type="InterPro" id="IPR034958">
    <property type="entry name" value="LIM1_Testin"/>
</dbReference>
<dbReference type="InterPro" id="IPR034959">
    <property type="entry name" value="LIM2_Testin"/>
</dbReference>
<dbReference type="InterPro" id="IPR034960">
    <property type="entry name" value="LIM3_Testin"/>
</dbReference>
<dbReference type="InterPro" id="IPR010442">
    <property type="entry name" value="PET_domain"/>
</dbReference>
<dbReference type="InterPro" id="IPR033724">
    <property type="entry name" value="PET_testin"/>
</dbReference>
<dbReference type="InterPro" id="IPR047120">
    <property type="entry name" value="Pk/Esn/Tes"/>
</dbReference>
<dbReference type="InterPro" id="IPR001781">
    <property type="entry name" value="Znf_LIM"/>
</dbReference>
<dbReference type="PANTHER" id="PTHR24211">
    <property type="entry name" value="LIM DOMAIN-CONTAINING PROTEIN"/>
    <property type="match status" value="1"/>
</dbReference>
<dbReference type="PANTHER" id="PTHR24211:SF1">
    <property type="entry name" value="TESTIN"/>
    <property type="match status" value="1"/>
</dbReference>
<dbReference type="Pfam" id="PF00412">
    <property type="entry name" value="LIM"/>
    <property type="match status" value="3"/>
</dbReference>
<dbReference type="Pfam" id="PF06297">
    <property type="entry name" value="PET"/>
    <property type="match status" value="1"/>
</dbReference>
<dbReference type="SMART" id="SM00132">
    <property type="entry name" value="LIM"/>
    <property type="match status" value="3"/>
</dbReference>
<dbReference type="SUPFAM" id="SSF57716">
    <property type="entry name" value="Glucocorticoid receptor-like (DNA-binding domain)"/>
    <property type="match status" value="2"/>
</dbReference>
<dbReference type="PROSITE" id="PS00478">
    <property type="entry name" value="LIM_DOMAIN_1"/>
    <property type="match status" value="2"/>
</dbReference>
<dbReference type="PROSITE" id="PS50023">
    <property type="entry name" value="LIM_DOMAIN_2"/>
    <property type="match status" value="3"/>
</dbReference>
<dbReference type="PROSITE" id="PS51303">
    <property type="entry name" value="PET"/>
    <property type="match status" value="1"/>
</dbReference>
<accession>Q90YH9</accession>
<sequence>MDLESKVKKMGLGHEQGFGAPCLKCKDKCEGFELHFWRKICRNCKCGQEEHDVLTSNEEDRKVGKLFEDTKYTTLIAKLKNDGIPMYKRNVMILTNPVPAKKNISINTVTYEWAPPVQNQTLARQYMQMLPKEKQPVAGSEGAQYRKKQLAKQLPAHDQDPSKCHELSPNEVKQMEQFVKKYKNEALGVGDVKLPGELETKATDKNNVNSGDRSTSAAVGAMEDKSADQKASQYSCYRCKLNMKEGDPAVYAERAGYDKLWHPACFVCCTCSELLVDMIYFWKNGNLYCGRHYCDSEKPRCAGCDELIFSNEYTQAEGQNWHLKHFCCFDCDCVLAGEIYVMVNDKPVCRPCYVKKHAAICQGCHNAIDPEVQRVTYNNFNWHATQECFLCSCCSKCLIGQKFMPVEGMVFCSVECKKKMMS</sequence>
<gene>
    <name type="primary">TES</name>
</gene>
<feature type="chain" id="PRO_0000278803" description="Testin">
    <location>
        <begin position="1"/>
        <end position="422"/>
    </location>
</feature>
<feature type="domain" description="PET" evidence="3">
    <location>
        <begin position="92"/>
        <end position="199"/>
    </location>
</feature>
<feature type="domain" description="LIM zinc-binding 1" evidence="2">
    <location>
        <begin position="234"/>
        <end position="297"/>
    </location>
</feature>
<feature type="domain" description="LIM zinc-binding 2" evidence="2">
    <location>
        <begin position="299"/>
        <end position="359"/>
    </location>
</feature>
<feature type="domain" description="LIM zinc-binding 3" evidence="2">
    <location>
        <begin position="362"/>
        <end position="422"/>
    </location>
</feature>
<feature type="region of interest" description="Disordered" evidence="4">
    <location>
        <begin position="198"/>
        <end position="224"/>
    </location>
</feature>
<feature type="compositionally biased region" description="Polar residues" evidence="4">
    <location>
        <begin position="205"/>
        <end position="217"/>
    </location>
</feature>